<reference evidence="7" key="1">
    <citation type="submission" date="2002-08" db="EMBL/GenBank/DDBJ databases">
        <title>mRNA for NKR-P1B protein of Rattus norvegicus strain TO.</title>
        <authorList>
            <person name="Hundrieser J."/>
            <person name="Wonigeit K."/>
        </authorList>
    </citation>
    <scope>NUCLEOTIDE SEQUENCE [MRNA]</scope>
    <source>
        <strain evidence="7">TO</strain>
    </source>
</reference>
<reference evidence="6" key="2">
    <citation type="journal article" date="2006" name="J. Immunol.">
        <title>The novel inhibitory NKR-P1C receptor and Ly49s3 identify two complementary, functionally distinct NK cell subsets in rats.</title>
        <authorList>
            <person name="Kveberg L."/>
            <person name="Baeck C.J."/>
            <person name="Dai K.-Z."/>
            <person name="Inngjerdingen M."/>
            <person name="Rolstad B."/>
            <person name="Ryan J.C."/>
            <person name="Vaage J.T."/>
            <person name="Naper C."/>
        </authorList>
    </citation>
    <scope>FUNCTION</scope>
    <scope>SUBUNIT</scope>
    <scope>TISSUE SPECIFICITY</scope>
</reference>
<reference evidence="6" key="3">
    <citation type="journal article" date="2007" name="Immunity">
        <title>Cytomegalovirus evasion of innate immunity by subversion of the NKR-P1B:Ocil/Clr-b missing-self axis.</title>
        <authorList>
            <person name="Voigt S."/>
            <person name="Mesci A."/>
            <person name="Ettinger J."/>
            <person name="Fine J.H."/>
            <person name="Chen P."/>
            <person name="Chou W."/>
            <person name="Carlyle J.R."/>
        </authorList>
    </citation>
    <scope>FUNCTION</scope>
    <scope>POLYMORPHISM</scope>
</reference>
<evidence type="ECO:0000250" key="1">
    <source>
        <dbReference type="UniProtKB" id="P27812"/>
    </source>
</evidence>
<evidence type="ECO:0000255" key="2"/>
<evidence type="ECO:0000255" key="3">
    <source>
        <dbReference type="PROSITE-ProRule" id="PRU00040"/>
    </source>
</evidence>
<evidence type="ECO:0000269" key="4">
    <source>
    </source>
</evidence>
<evidence type="ECO:0000269" key="5">
    <source>
    </source>
</evidence>
<evidence type="ECO:0000305" key="6"/>
<evidence type="ECO:0000312" key="7">
    <source>
        <dbReference type="EMBL" id="AAQ11375.1"/>
    </source>
</evidence>
<keyword id="KW-1015">Disulfide bond</keyword>
<keyword id="KW-0430">Lectin</keyword>
<keyword id="KW-0472">Membrane</keyword>
<keyword id="KW-0675">Receptor</keyword>
<keyword id="KW-1185">Reference proteome</keyword>
<keyword id="KW-0735">Signal-anchor</keyword>
<keyword id="KW-0812">Transmembrane</keyword>
<keyword id="KW-1133">Transmembrane helix</keyword>
<proteinExistence type="evidence at protein level"/>
<name>KRBBC_RAT</name>
<organism>
    <name type="scientific">Rattus norvegicus</name>
    <name type="common">Rat</name>
    <dbReference type="NCBI Taxonomy" id="10116"/>
    <lineage>
        <taxon>Eukaryota</taxon>
        <taxon>Metazoa</taxon>
        <taxon>Chordata</taxon>
        <taxon>Craniata</taxon>
        <taxon>Vertebrata</taxon>
        <taxon>Euteleostomi</taxon>
        <taxon>Mammalia</taxon>
        <taxon>Eutheria</taxon>
        <taxon>Euarchontoglires</taxon>
        <taxon>Glires</taxon>
        <taxon>Rodentia</taxon>
        <taxon>Myomorpha</taxon>
        <taxon>Muroidea</taxon>
        <taxon>Muridae</taxon>
        <taxon>Murinae</taxon>
        <taxon>Rattus</taxon>
    </lineage>
</organism>
<gene>
    <name evidence="7" type="primary">Klrb1b</name>
    <name evidence="1" type="synonym">Nkrp1b</name>
</gene>
<dbReference type="EMBL" id="AF541943">
    <property type="protein sequence ID" value="AAQ11375.1"/>
    <property type="molecule type" value="mRNA"/>
</dbReference>
<dbReference type="SMR" id="Q5NKN2"/>
<dbReference type="UCSC" id="RGD:2975">
    <property type="organism name" value="rat"/>
</dbReference>
<dbReference type="AGR" id="RGD:2975"/>
<dbReference type="RGD" id="2975">
    <property type="gene designation" value="Klrb1b"/>
</dbReference>
<dbReference type="PhylomeDB" id="Q5NKN2"/>
<dbReference type="Proteomes" id="UP000002494">
    <property type="component" value="Unplaced"/>
</dbReference>
<dbReference type="GO" id="GO:0009986">
    <property type="term" value="C:cell surface"/>
    <property type="evidence" value="ECO:0000266"/>
    <property type="project" value="RGD"/>
</dbReference>
<dbReference type="GO" id="GO:0009897">
    <property type="term" value="C:external side of plasma membrane"/>
    <property type="evidence" value="ECO:0000266"/>
    <property type="project" value="RGD"/>
</dbReference>
<dbReference type="GO" id="GO:0005886">
    <property type="term" value="C:plasma membrane"/>
    <property type="evidence" value="ECO:0000266"/>
    <property type="project" value="RGD"/>
</dbReference>
<dbReference type="GO" id="GO:0030246">
    <property type="term" value="F:carbohydrate binding"/>
    <property type="evidence" value="ECO:0007669"/>
    <property type="project" value="UniProtKB-KW"/>
</dbReference>
<dbReference type="GO" id="GO:0042802">
    <property type="term" value="F:identical protein binding"/>
    <property type="evidence" value="ECO:0000266"/>
    <property type="project" value="RGD"/>
</dbReference>
<dbReference type="GO" id="GO:0042803">
    <property type="term" value="F:protein homodimerization activity"/>
    <property type="evidence" value="ECO:0000266"/>
    <property type="project" value="RGD"/>
</dbReference>
<dbReference type="GO" id="GO:0038023">
    <property type="term" value="F:signaling receptor activity"/>
    <property type="evidence" value="ECO:0000266"/>
    <property type="project" value="RGD"/>
</dbReference>
<dbReference type="GO" id="GO:0030101">
    <property type="term" value="P:natural killer cell activation"/>
    <property type="evidence" value="ECO:0000266"/>
    <property type="project" value="RGD"/>
</dbReference>
<dbReference type="GO" id="GO:0045954">
    <property type="term" value="P:positive regulation of natural killer cell mediated cytotoxicity"/>
    <property type="evidence" value="ECO:0000266"/>
    <property type="project" value="RGD"/>
</dbReference>
<dbReference type="GO" id="GO:0042269">
    <property type="term" value="P:regulation of natural killer cell mediated cytotoxicity"/>
    <property type="evidence" value="ECO:0000318"/>
    <property type="project" value="GO_Central"/>
</dbReference>
<dbReference type="CDD" id="cd03593">
    <property type="entry name" value="CLECT_NK_receptors_like"/>
    <property type="match status" value="1"/>
</dbReference>
<dbReference type="FunFam" id="3.10.100.10:FF:000077">
    <property type="entry name" value="Killer cell lectin-like receptor subfamily B member 1A"/>
    <property type="match status" value="1"/>
</dbReference>
<dbReference type="Gene3D" id="3.10.100.10">
    <property type="entry name" value="Mannose-Binding Protein A, subunit A"/>
    <property type="match status" value="1"/>
</dbReference>
<dbReference type="InterPro" id="IPR001304">
    <property type="entry name" value="C-type_lectin-like"/>
</dbReference>
<dbReference type="InterPro" id="IPR016186">
    <property type="entry name" value="C-type_lectin-like/link_sf"/>
</dbReference>
<dbReference type="InterPro" id="IPR016187">
    <property type="entry name" value="CTDL_fold"/>
</dbReference>
<dbReference type="InterPro" id="IPR051527">
    <property type="entry name" value="KLR_subfamily_B"/>
</dbReference>
<dbReference type="InterPro" id="IPR033992">
    <property type="entry name" value="NKR-like_CTLD"/>
</dbReference>
<dbReference type="PANTHER" id="PTHR46784">
    <property type="entry name" value="KILLER CELL LECTIN-LIKE RECEPTOR SUBFAMILY B MEMBER 1"/>
    <property type="match status" value="1"/>
</dbReference>
<dbReference type="PANTHER" id="PTHR46784:SF1">
    <property type="entry name" value="KILLER CELL LECTIN-LIKE RECEPTOR SUBFAMILY B MEMBER 1"/>
    <property type="match status" value="1"/>
</dbReference>
<dbReference type="Pfam" id="PF00059">
    <property type="entry name" value="Lectin_C"/>
    <property type="match status" value="1"/>
</dbReference>
<dbReference type="SMART" id="SM00034">
    <property type="entry name" value="CLECT"/>
    <property type="match status" value="1"/>
</dbReference>
<dbReference type="SUPFAM" id="SSF56436">
    <property type="entry name" value="C-type lectin-like"/>
    <property type="match status" value="1"/>
</dbReference>
<dbReference type="PROSITE" id="PS50041">
    <property type="entry name" value="C_TYPE_LECTIN_2"/>
    <property type="match status" value="1"/>
</dbReference>
<sequence length="223" mass="24882">MDTAVVYADLHLARTGEPKRESPPSLSPDTCQCPRWHRLALKLGCACFILLVLSVIGLGVLVLTLLQKPLLQNSPADVQENRTKSTDSPAKLKCPKDWLSHRDKCFHVSQTSNSWKESLADCDGKGATLLLIQDQEELRFVRNLTKGKDRSFWIGLSYTLPDRNWKWINGSTLNSDVLSITGDTEKGSCASVSQDKVLSESCDSDNIWICQKELKRESTCNDS</sequence>
<protein>
    <recommendedName>
        <fullName>Killer cell lectin-like receptor subfamily B member 1B allele C</fullName>
    </recommendedName>
    <alternativeName>
        <fullName>CD161 antigen-like family member B</fullName>
    </alternativeName>
    <alternativeName>
        <fullName>Natural killer cell surface protein NKR-P1B allele TO</fullName>
    </alternativeName>
    <cdAntigenName>CD161b</cdAntigenName>
</protein>
<feature type="chain" id="PRO_0000292986" description="Killer cell lectin-like receptor subfamily B member 1B allele C">
    <location>
        <begin position="1"/>
        <end position="223"/>
    </location>
</feature>
<feature type="topological domain" description="Cytoplasmic" evidence="2">
    <location>
        <begin position="1"/>
        <end position="45"/>
    </location>
</feature>
<feature type="transmembrane region" description="Helical; Signal-anchor for type II membrane protein" evidence="2">
    <location>
        <begin position="46"/>
        <end position="66"/>
    </location>
</feature>
<feature type="topological domain" description="Extracellular" evidence="2">
    <location>
        <begin position="67"/>
        <end position="223"/>
    </location>
</feature>
<feature type="domain" description="C-type lectin" evidence="3">
    <location>
        <begin position="101"/>
        <end position="211"/>
    </location>
</feature>
<feature type="short sequence motif" description="ITIM motif">
    <location>
        <begin position="5"/>
        <end position="10"/>
    </location>
</feature>
<feature type="short sequence motif" description="LCK-binding motif" evidence="1">
    <location>
        <begin position="31"/>
        <end position="34"/>
    </location>
</feature>
<feature type="disulfide bond" evidence="3">
    <location>
        <begin position="122"/>
        <end position="210"/>
    </location>
</feature>
<feature type="disulfide bond" evidence="3">
    <location>
        <begin position="189"/>
        <end position="202"/>
    </location>
</feature>
<comment type="function">
    <text evidence="4 5">Receptor for CLEC2D/OCIL. Ligand-binding contributes to inhibition of cytotoxic natural killer (NK) cells. May mediate MHC class I-independent 'missing-self' recognition of allografts, tumor cells and virus-infected cells.</text>
</comment>
<comment type="subunit">
    <text evidence="1 4">Homodimer; disulfide-linked. Interacts with tyrosine kinase LCK. Binds PTPN6/SHP-1 in a phosphorylation-dependent manner.</text>
</comment>
<comment type="subcellular location">
    <subcellularLocation>
        <location evidence="2">Membrane</location>
        <topology evidence="2">Single-pass type II membrane protein</topology>
    </subcellularLocation>
</comment>
<comment type="tissue specificity">
    <text evidence="4">Expressed in a subset of natural killer cells.</text>
</comment>
<comment type="domain">
    <text evidence="1">Contains 1 copy of a cytoplasmic motif that is referred to as the immunoreceptor tyrosine-based inhibitor motif (ITIM). The phosphorylated ITIM motif can bind the SH2 domain of several SH2-containing phosphatases leading to down-regulation of cell activation (By similarity).</text>
</comment>
<comment type="polymorphism">
    <text evidence="5">Alleles A, B and C are highly divergent forms of Klrb1b. Alleles A and B differ in their susceptibility to evasion of innate immunity by the rat cytomegalovirus (CMV). In contrast to allele B, allele A shows very low binding of a viral protein mimicking the Klrb1b ligand CLEC2D as well as low susceptibility to this MHC class I-independent viral evasion mechanism.</text>
</comment>
<accession>Q5NKN2</accession>